<feature type="chain" id="PRO_0000104153" description="Uncharacterized protein ML0638">
    <location>
        <begin position="1"/>
        <end position="100"/>
    </location>
</feature>
<name>Y638_MYCLE</name>
<comment type="subcellular location">
    <subcellularLocation>
        <location evidence="1">Secreted</location>
    </subcellularLocation>
</comment>
<proteinExistence type="predicted"/>
<evidence type="ECO:0000305" key="1"/>
<keyword id="KW-1185">Reference proteome</keyword>
<keyword id="KW-0964">Secreted</keyword>
<protein>
    <recommendedName>
        <fullName>Uncharacterized protein ML0638</fullName>
    </recommendedName>
</protein>
<organism>
    <name type="scientific">Mycobacterium leprae (strain TN)</name>
    <dbReference type="NCBI Taxonomy" id="272631"/>
    <lineage>
        <taxon>Bacteria</taxon>
        <taxon>Bacillati</taxon>
        <taxon>Actinomycetota</taxon>
        <taxon>Actinomycetes</taxon>
        <taxon>Mycobacteriales</taxon>
        <taxon>Mycobacteriaceae</taxon>
        <taxon>Mycobacterium</taxon>
    </lineage>
</organism>
<dbReference type="EMBL" id="U00016">
    <property type="protein sequence ID" value="AAA17175.1"/>
    <property type="molecule type" value="Genomic_DNA"/>
</dbReference>
<dbReference type="EMBL" id="AL583919">
    <property type="protein sequence ID" value="CAC30147.1"/>
    <property type="molecule type" value="Genomic_DNA"/>
</dbReference>
<dbReference type="PIR" id="S72607">
    <property type="entry name" value="S72607"/>
</dbReference>
<dbReference type="RefSeq" id="NP_301527.1">
    <property type="nucleotide sequence ID" value="NC_002677.1"/>
</dbReference>
<dbReference type="RefSeq" id="WP_010907851.1">
    <property type="nucleotide sequence ID" value="NC_002677.1"/>
</dbReference>
<dbReference type="STRING" id="272631.gene:17574460"/>
<dbReference type="KEGG" id="mle:ML0638"/>
<dbReference type="Leproma" id="ML0638"/>
<dbReference type="HOGENOM" id="CLU_2302767_0_0_11"/>
<dbReference type="Proteomes" id="UP000000806">
    <property type="component" value="Chromosome"/>
</dbReference>
<dbReference type="GO" id="GO:0005576">
    <property type="term" value="C:extracellular region"/>
    <property type="evidence" value="ECO:0007669"/>
    <property type="project" value="UniProtKB-SubCell"/>
</dbReference>
<gene>
    <name type="ordered locus">ML0638</name>
    <name type="ORF">B1937_F3_110</name>
</gene>
<accession>Q49769</accession>
<reference key="1">
    <citation type="submission" date="1994-03" db="EMBL/GenBank/DDBJ databases">
        <authorList>
            <person name="Smith D.R."/>
            <person name="Robison K."/>
        </authorList>
    </citation>
    <scope>NUCLEOTIDE SEQUENCE [GENOMIC DNA]</scope>
</reference>
<reference key="2">
    <citation type="journal article" date="2001" name="Nature">
        <title>Massive gene decay in the leprosy bacillus.</title>
        <authorList>
            <person name="Cole S.T."/>
            <person name="Eiglmeier K."/>
            <person name="Parkhill J."/>
            <person name="James K.D."/>
            <person name="Thomson N.R."/>
            <person name="Wheeler P.R."/>
            <person name="Honore N."/>
            <person name="Garnier T."/>
            <person name="Churcher C.M."/>
            <person name="Harris D.E."/>
            <person name="Mungall K.L."/>
            <person name="Basham D."/>
            <person name="Brown D."/>
            <person name="Chillingworth T."/>
            <person name="Connor R."/>
            <person name="Davies R.M."/>
            <person name="Devlin K."/>
            <person name="Duthoy S."/>
            <person name="Feltwell T."/>
            <person name="Fraser A."/>
            <person name="Hamlin N."/>
            <person name="Holroyd S."/>
            <person name="Hornsby T."/>
            <person name="Jagels K."/>
            <person name="Lacroix C."/>
            <person name="Maclean J."/>
            <person name="Moule S."/>
            <person name="Murphy L.D."/>
            <person name="Oliver K."/>
            <person name="Quail M.A."/>
            <person name="Rajandream M.A."/>
            <person name="Rutherford K.M."/>
            <person name="Rutter S."/>
            <person name="Seeger K."/>
            <person name="Simon S."/>
            <person name="Simmonds M."/>
            <person name="Skelton J."/>
            <person name="Squares R."/>
            <person name="Squares S."/>
            <person name="Stevens K."/>
            <person name="Taylor K."/>
            <person name="Whitehead S."/>
            <person name="Woodward J.R."/>
            <person name="Barrell B.G."/>
        </authorList>
    </citation>
    <scope>NUCLEOTIDE SEQUENCE [LARGE SCALE GENOMIC DNA]</scope>
    <source>
        <strain>TN</strain>
    </source>
</reference>
<sequence>MIDYNNVFGAGVVAAVSTAGTPHAATSAAAGQYRVAATGTRPWIGAILNYEVSPIFARWPRNRNHQDPWHSFWANSLPTWYRSFLKKDSHQTRKQMKRTC</sequence>